<sequence>MKVTAAFASLLLTAFAAPAPEPVLVSRSAGINYVQNYNGNLGDFTYDESTGTFSMYWEDGVSSDFVVGLGWTTGSSKSITYSAQYSASSSSSYLAVYGWVNSPQAEYYIVEDYGDYNPCSSATSLGTVYSDGSTYQVCTDTRRTRPSITGTSTFTQYFSVRESTRTSGTVTIANHFNFWAQHGFGNSNFNYQVMAVEAWNGVGSASVTISS</sequence>
<proteinExistence type="evidence at protein level"/>
<reference key="1">
    <citation type="journal article" date="1997" name="Biotechnol. Lett.">
        <title>Cloning of two beta-xylanase-encoding genes from Aspergillus niger and their expression in Saccharomyces cerevisiae.</title>
        <authorList>
            <person name="Luttig M."/>
            <person name="Pretorius I.S."/>
            <person name="van Zyl W.H."/>
        </authorList>
    </citation>
    <scope>NUCLEOTIDE SEQUENCE [MRNA]</scope>
    <scope>FUNCTION</scope>
    <scope>BIOPHYSICOCHEMICAL PROPERTIES</scope>
    <source>
        <strain>ATCC 90196 / Alo MP-22</strain>
    </source>
</reference>
<comment type="function">
    <text evidence="1 5">Endo-1,4-beta-xylanase involved in the hydrolysis of xylan, a major structural heterogeneous polysaccharide found in plant biomass representing the second most abundant polysaccharide in the biosphere, after cellulose.</text>
</comment>
<comment type="catalytic activity">
    <reaction>
        <text>Endohydrolysis of (1-&gt;4)-beta-D-xylosidic linkages in xylans.</text>
        <dbReference type="EC" id="3.2.1.8"/>
    </reaction>
</comment>
<comment type="biophysicochemical properties">
    <phDependence>
        <text evidence="5">Optimum pH is 4.0.</text>
    </phDependence>
    <temperatureDependence>
        <text evidence="5">Optimum temperature is 60 degrees Celsius.</text>
    </temperatureDependence>
</comment>
<comment type="pathway">
    <text>Glycan degradation; xylan degradation.</text>
</comment>
<comment type="subcellular location">
    <subcellularLocation>
        <location evidence="1">Secreted</location>
    </subcellularLocation>
</comment>
<comment type="similarity">
    <text evidence="6">Belongs to the glycosyl hydrolase 11 (cellulase G) family.</text>
</comment>
<gene>
    <name type="primary">XYN5</name>
</gene>
<organism>
    <name type="scientific">Aspergillus niger</name>
    <dbReference type="NCBI Taxonomy" id="5061"/>
    <lineage>
        <taxon>Eukaryota</taxon>
        <taxon>Fungi</taxon>
        <taxon>Dikarya</taxon>
        <taxon>Ascomycota</taxon>
        <taxon>Pezizomycotina</taxon>
        <taxon>Eurotiomycetes</taxon>
        <taxon>Eurotiomycetidae</taxon>
        <taxon>Eurotiales</taxon>
        <taxon>Aspergillaceae</taxon>
        <taxon>Aspergillus</taxon>
        <taxon>Aspergillus subgen. Circumdati</taxon>
    </lineage>
</organism>
<dbReference type="EC" id="3.2.1.8"/>
<dbReference type="EMBL" id="U39784">
    <property type="protein sequence ID" value="AAA99065.1"/>
    <property type="molecule type" value="mRNA"/>
</dbReference>
<dbReference type="SMR" id="Q12549"/>
<dbReference type="CAZy" id="GH11">
    <property type="family name" value="Glycoside Hydrolase Family 11"/>
</dbReference>
<dbReference type="PaxDb" id="5061-CADANGAP00011453"/>
<dbReference type="VEuPathDB" id="FungiDB:An14g07390"/>
<dbReference type="VEuPathDB" id="FungiDB:ASPNIDRAFT2_1101058"/>
<dbReference type="VEuPathDB" id="FungiDB:ATCC64974_22790"/>
<dbReference type="VEuPathDB" id="FungiDB:M747DRAFT_300402"/>
<dbReference type="eggNOG" id="ENOG502RXA7">
    <property type="taxonomic scope" value="Eukaryota"/>
</dbReference>
<dbReference type="UniPathway" id="UPA00114"/>
<dbReference type="GO" id="GO:0005576">
    <property type="term" value="C:extracellular region"/>
    <property type="evidence" value="ECO:0007669"/>
    <property type="project" value="UniProtKB-SubCell"/>
</dbReference>
<dbReference type="GO" id="GO:0031176">
    <property type="term" value="F:endo-1,4-beta-xylanase activity"/>
    <property type="evidence" value="ECO:0000314"/>
    <property type="project" value="UniProtKB"/>
</dbReference>
<dbReference type="GO" id="GO:0045493">
    <property type="term" value="P:xylan catabolic process"/>
    <property type="evidence" value="ECO:0000314"/>
    <property type="project" value="UniProtKB"/>
</dbReference>
<dbReference type="FunFam" id="2.60.120.180:FF:000002">
    <property type="entry name" value="Endo-1,4-beta-xylanase A"/>
    <property type="match status" value="1"/>
</dbReference>
<dbReference type="Gene3D" id="2.60.120.180">
    <property type="match status" value="1"/>
</dbReference>
<dbReference type="InterPro" id="IPR013320">
    <property type="entry name" value="ConA-like_dom_sf"/>
</dbReference>
<dbReference type="InterPro" id="IPR013319">
    <property type="entry name" value="GH11/12"/>
</dbReference>
<dbReference type="InterPro" id="IPR018208">
    <property type="entry name" value="GH11_AS_1"/>
</dbReference>
<dbReference type="InterPro" id="IPR033123">
    <property type="entry name" value="GH11_dom"/>
</dbReference>
<dbReference type="InterPro" id="IPR001137">
    <property type="entry name" value="Glyco_hydro_11"/>
</dbReference>
<dbReference type="PANTHER" id="PTHR46828">
    <property type="entry name" value="ENDO-1,4-BETA-XYLANASE A-RELATED"/>
    <property type="match status" value="1"/>
</dbReference>
<dbReference type="PANTHER" id="PTHR46828:SF2">
    <property type="entry name" value="ENDO-1,4-BETA-XYLANASE A-RELATED"/>
    <property type="match status" value="1"/>
</dbReference>
<dbReference type="Pfam" id="PF00457">
    <property type="entry name" value="Glyco_hydro_11"/>
    <property type="match status" value="1"/>
</dbReference>
<dbReference type="PRINTS" id="PR00911">
    <property type="entry name" value="GLHYDRLASE11"/>
</dbReference>
<dbReference type="SUPFAM" id="SSF49899">
    <property type="entry name" value="Concanavalin A-like lectins/glucanases"/>
    <property type="match status" value="1"/>
</dbReference>
<dbReference type="PROSITE" id="PS00776">
    <property type="entry name" value="GH11_1"/>
    <property type="match status" value="1"/>
</dbReference>
<dbReference type="PROSITE" id="PS51761">
    <property type="entry name" value="GH11_3"/>
    <property type="match status" value="1"/>
</dbReference>
<feature type="signal peptide" evidence="2">
    <location>
        <begin position="1"/>
        <end position="16"/>
    </location>
</feature>
<feature type="chain" id="PRO_0000393172" description="Endo-1,4-beta-xylanase 5">
    <location>
        <begin position="17"/>
        <end position="211"/>
    </location>
</feature>
<feature type="domain" description="GH11" evidence="3">
    <location>
        <begin position="19"/>
        <end position="210"/>
    </location>
</feature>
<feature type="active site" description="Nucleophile" evidence="4">
    <location>
        <position position="106"/>
    </location>
</feature>
<feature type="active site" description="Proton donor" evidence="1">
    <location>
        <position position="197"/>
    </location>
</feature>
<protein>
    <recommendedName>
        <fullName>Endo-1,4-beta-xylanase 5</fullName>
        <shortName>Xylanase 5</shortName>
        <ecNumber>3.2.1.8</ecNumber>
    </recommendedName>
    <alternativeName>
        <fullName>1,4-beta-D-xylan xylanohydrolase 5</fullName>
    </alternativeName>
</protein>
<evidence type="ECO:0000250" key="1"/>
<evidence type="ECO:0000255" key="2"/>
<evidence type="ECO:0000255" key="3">
    <source>
        <dbReference type="PROSITE-ProRule" id="PRU01097"/>
    </source>
</evidence>
<evidence type="ECO:0000255" key="4">
    <source>
        <dbReference type="PROSITE-ProRule" id="PRU10062"/>
    </source>
</evidence>
<evidence type="ECO:0000269" key="5">
    <source ref="1"/>
</evidence>
<evidence type="ECO:0000305" key="6"/>
<keyword id="KW-0119">Carbohydrate metabolism</keyword>
<keyword id="KW-0326">Glycosidase</keyword>
<keyword id="KW-0378">Hydrolase</keyword>
<keyword id="KW-0624">Polysaccharide degradation</keyword>
<keyword id="KW-0964">Secreted</keyword>
<keyword id="KW-0732">Signal</keyword>
<keyword id="KW-0858">Xylan degradation</keyword>
<name>XYN5_ASPNG</name>
<accession>Q12549</accession>